<reference key="1">
    <citation type="submission" date="2005-11" db="EMBL/GenBank/DDBJ databases">
        <title>Shisa family gene.</title>
        <authorList>
            <person name="Nagano T."/>
            <person name="Takehara S."/>
            <person name="Aizawa S."/>
            <person name="Yamamoto A."/>
        </authorList>
    </citation>
    <scope>NUCLEOTIDE SEQUENCE [MRNA]</scope>
</reference>
<reference key="2">
    <citation type="submission" date="2003-08" db="EMBL/GenBank/DDBJ databases">
        <authorList>
            <consortium name="NIH - Xenopus Gene Collection (XGC) project"/>
        </authorList>
    </citation>
    <scope>NUCLEOTIDE SEQUENCE [LARGE SCALE MRNA]</scope>
    <source>
        <tissue>Embryo</tissue>
    </source>
</reference>
<reference key="3">
    <citation type="journal article" date="2006" name="Development">
        <title>Shisa2 promotes the maturation of somitic precursors and transition to the segmental fate in Xenopus embryos.</title>
        <authorList>
            <person name="Nagano T."/>
            <person name="Takehara S."/>
            <person name="Takahashi M."/>
            <person name="Aizawa S."/>
            <person name="Yamamoto A."/>
        </authorList>
    </citation>
    <scope>FUNCTION</scope>
    <scope>INTERACTION WITH FZD8 AND FGFR1</scope>
    <scope>SUBCELLULAR LOCATION</scope>
</reference>
<keyword id="KW-0217">Developmental protein</keyword>
<keyword id="KW-0256">Endoplasmic reticulum</keyword>
<keyword id="KW-0472">Membrane</keyword>
<keyword id="KW-1185">Reference proteome</keyword>
<keyword id="KW-0732">Signal</keyword>
<keyword id="KW-0812">Transmembrane</keyword>
<keyword id="KW-1133">Transmembrane helix</keyword>
<comment type="function">
    <text evidence="4">Plays an essential role in the maturation of presomitic mesoderm cells by individual attenuation of both fgf and wnt signaling. Regulates head and somite developmen. Inhibits both wnt and fgf signaling through the regulation of protein maturation and cell surface transportation of their receptors within the endoplasmic reticulum.</text>
</comment>
<comment type="subunit">
    <text evidence="4">Interacts with fzd8 and fgfr1.</text>
</comment>
<comment type="subcellular location">
    <subcellularLocation>
        <location evidence="1 4">Endoplasmic reticulum membrane</location>
        <topology evidence="5">Single-pass type I membrane protein</topology>
    </subcellularLocation>
</comment>
<comment type="miscellaneous">
    <text>'Shisa' was named after a sculpture form, common to southern Japan, with a large head similar to the Egyptian sphinx.</text>
</comment>
<comment type="similarity">
    <text evidence="5">Belongs to the shisa family.</text>
</comment>
<feature type="signal peptide" evidence="2">
    <location>
        <begin position="1"/>
        <end position="19"/>
    </location>
</feature>
<feature type="chain" id="PRO_0000330027" description="Protein shisa-3">
    <location>
        <begin position="20"/>
        <end position="232"/>
    </location>
</feature>
<feature type="topological domain" description="Lumenal" evidence="5">
    <location>
        <begin position="20"/>
        <end position="93"/>
    </location>
</feature>
<feature type="transmembrane region" description="Helical" evidence="2">
    <location>
        <begin position="94"/>
        <end position="114"/>
    </location>
</feature>
<feature type="topological domain" description="Cytoplasmic" evidence="5">
    <location>
        <begin position="115"/>
        <end position="232"/>
    </location>
</feature>
<feature type="region of interest" description="Disordered" evidence="3">
    <location>
        <begin position="146"/>
        <end position="185"/>
    </location>
</feature>
<feature type="compositionally biased region" description="Low complexity" evidence="3">
    <location>
        <begin position="151"/>
        <end position="177"/>
    </location>
</feature>
<feature type="sequence conflict" description="In Ref. 1; BAE53532." evidence="5" ref="1">
    <original>N</original>
    <variation>D</variation>
    <location>
        <position position="200"/>
    </location>
</feature>
<organism>
    <name type="scientific">Xenopus laevis</name>
    <name type="common">African clawed frog</name>
    <dbReference type="NCBI Taxonomy" id="8355"/>
    <lineage>
        <taxon>Eukaryota</taxon>
        <taxon>Metazoa</taxon>
        <taxon>Chordata</taxon>
        <taxon>Craniata</taxon>
        <taxon>Vertebrata</taxon>
        <taxon>Euteleostomi</taxon>
        <taxon>Amphibia</taxon>
        <taxon>Batrachia</taxon>
        <taxon>Anura</taxon>
        <taxon>Pipoidea</taxon>
        <taxon>Pipidae</taxon>
        <taxon>Xenopodinae</taxon>
        <taxon>Xenopus</taxon>
        <taxon>Xenopus</taxon>
    </lineage>
</organism>
<evidence type="ECO:0000250" key="1"/>
<evidence type="ECO:0000255" key="2"/>
<evidence type="ECO:0000256" key="3">
    <source>
        <dbReference type="SAM" id="MobiDB-lite"/>
    </source>
</evidence>
<evidence type="ECO:0000269" key="4">
    <source>
    </source>
</evidence>
<evidence type="ECO:0000305" key="5"/>
<sequence>MRLLGCFFLIFLTWGSARAQGEYCHGWLDSAGNYQAGFQCPEDFDTADANICCGSCALRYCCAAADARLEQGSCTNHRELEKSGVSAQPVYVPFLIVGSIFIAFIIVGSLVAVYCCTCLRPKQTSQQPMRFTLRSYPPETLPMILTSGNLRTPSRQSSTATSSTSTGGSVRRLSSSRADPGYLVSSPPPPYSSAHSIHLNPSSTFLVSNQYFPYPLQPEAIANKSCPDFRQS</sequence>
<accession>Q7T0Z7</accession>
<accession>Q2WFL7</accession>
<dbReference type="EMBL" id="AB242598">
    <property type="protein sequence ID" value="BAE53532.1"/>
    <property type="molecule type" value="mRNA"/>
</dbReference>
<dbReference type="EMBL" id="BC055970">
    <property type="protein sequence ID" value="AAH55970.1"/>
    <property type="molecule type" value="mRNA"/>
</dbReference>
<dbReference type="RefSeq" id="NP_001079833.1">
    <property type="nucleotide sequence ID" value="NM_001086364.1"/>
</dbReference>
<dbReference type="SMR" id="Q7T0Z7"/>
<dbReference type="GeneID" id="379523"/>
<dbReference type="KEGG" id="xla:379523"/>
<dbReference type="AGR" id="Xenbase:XB-GENE-939879"/>
<dbReference type="CTD" id="379523"/>
<dbReference type="Xenbase" id="XB-GENE-939879">
    <property type="gene designation" value="shisa3.S"/>
</dbReference>
<dbReference type="OMA" id="QGVCTND"/>
<dbReference type="OrthoDB" id="10025410at2759"/>
<dbReference type="Proteomes" id="UP000186698">
    <property type="component" value="Chromosome 1S"/>
</dbReference>
<dbReference type="Bgee" id="379523">
    <property type="expression patterns" value="Expressed in brain and 9 other cell types or tissues"/>
</dbReference>
<dbReference type="GO" id="GO:0005789">
    <property type="term" value="C:endoplasmic reticulum membrane"/>
    <property type="evidence" value="ECO:0007669"/>
    <property type="project" value="UniProtKB-SubCell"/>
</dbReference>
<dbReference type="InterPro" id="IPR026910">
    <property type="entry name" value="Shisa"/>
</dbReference>
<dbReference type="InterPro" id="IPR053891">
    <property type="entry name" value="Shisa_N"/>
</dbReference>
<dbReference type="PANTHER" id="PTHR31395:SF4">
    <property type="entry name" value="PROTEIN SHISA-3 HOMOLOG"/>
    <property type="match status" value="1"/>
</dbReference>
<dbReference type="PANTHER" id="PTHR31395">
    <property type="entry name" value="SHISA"/>
    <property type="match status" value="1"/>
</dbReference>
<dbReference type="Pfam" id="PF13908">
    <property type="entry name" value="Shisa_N"/>
    <property type="match status" value="1"/>
</dbReference>
<gene>
    <name type="primary">shisa3</name>
</gene>
<name>SHSA3_XENLA</name>
<proteinExistence type="evidence at protein level"/>
<protein>
    <recommendedName>
        <fullName>Protein shisa-3</fullName>
    </recommendedName>
</protein>